<feature type="chain" id="PRO_0000154642" description="Large ribosomal subunit protein uL10">
    <location>
        <begin position="1"/>
        <end position="164"/>
    </location>
</feature>
<protein>
    <recommendedName>
        <fullName evidence="2">Large ribosomal subunit protein uL10</fullName>
    </recommendedName>
    <alternativeName>
        <fullName>50S ribosomal protein L10</fullName>
    </alternativeName>
</protein>
<name>RL10_HELPJ</name>
<reference key="1">
    <citation type="journal article" date="1999" name="Nature">
        <title>Genomic sequence comparison of two unrelated isolates of the human gastric pathogen Helicobacter pylori.</title>
        <authorList>
            <person name="Alm R.A."/>
            <person name="Ling L.-S.L."/>
            <person name="Moir D.T."/>
            <person name="King B.L."/>
            <person name="Brown E.D."/>
            <person name="Doig P.C."/>
            <person name="Smith D.R."/>
            <person name="Noonan B."/>
            <person name="Guild B.C."/>
            <person name="deJonge B.L."/>
            <person name="Carmel G."/>
            <person name="Tummino P.J."/>
            <person name="Caruso A."/>
            <person name="Uria-Nickelsen M."/>
            <person name="Mills D.M."/>
            <person name="Ives C."/>
            <person name="Gibson R."/>
            <person name="Merberg D."/>
            <person name="Mills S.D."/>
            <person name="Jiang Q."/>
            <person name="Taylor D.E."/>
            <person name="Vovis G.F."/>
            <person name="Trust T.J."/>
        </authorList>
    </citation>
    <scope>NUCLEOTIDE SEQUENCE [LARGE SCALE GENOMIC DNA]</scope>
    <source>
        <strain>J99 / ATCC 700824</strain>
    </source>
</reference>
<accession>Q9ZK22</accession>
<gene>
    <name type="primary">rplJ</name>
    <name type="ordered locus">jhp_1123</name>
</gene>
<comment type="function">
    <text evidence="1">Forms part of the ribosomal stalk, playing a central role in the interaction of the ribosome with GTP-bound translation factors.</text>
</comment>
<comment type="subunit">
    <text evidence="1">Part of the ribosomal stalk of the 50S ribosomal subunit. The N-terminus interacts with L11 and the large rRNA to form the base of the stalk. The C-terminus forms an elongated spine to which L12 dimers bind in a sequential fashion forming a multimeric L10(L12)X complex (By similarity).</text>
</comment>
<comment type="similarity">
    <text evidence="2">Belongs to the universal ribosomal protein uL10 family.</text>
</comment>
<sequence>MQKQHQRQHKVELVANLKSQFDSAKALLICDYKGLSVKKLEALRNKARIQGIKVQVIKNTLAHIAMKEVGCADLDLKETNVFLWGDDQIALSKLVFDFQKEHKDHFVLKAGLFDKESVSVAHVEAVSKLPSKEELMGMLLSVWTAPARYFVTGLDNLRKAKEEN</sequence>
<proteinExistence type="inferred from homology"/>
<organism>
    <name type="scientific">Helicobacter pylori (strain J99 / ATCC 700824)</name>
    <name type="common">Campylobacter pylori J99</name>
    <dbReference type="NCBI Taxonomy" id="85963"/>
    <lineage>
        <taxon>Bacteria</taxon>
        <taxon>Pseudomonadati</taxon>
        <taxon>Campylobacterota</taxon>
        <taxon>Epsilonproteobacteria</taxon>
        <taxon>Campylobacterales</taxon>
        <taxon>Helicobacteraceae</taxon>
        <taxon>Helicobacter</taxon>
    </lineage>
</organism>
<evidence type="ECO:0000250" key="1"/>
<evidence type="ECO:0000305" key="2"/>
<dbReference type="EMBL" id="AE001439">
    <property type="protein sequence ID" value="AAD06701.1"/>
    <property type="molecule type" value="Genomic_DNA"/>
</dbReference>
<dbReference type="PIR" id="D71846">
    <property type="entry name" value="D71846"/>
</dbReference>
<dbReference type="RefSeq" id="WP_001171750.1">
    <property type="nucleotide sequence ID" value="NC_000921.1"/>
</dbReference>
<dbReference type="SMR" id="Q9ZK22"/>
<dbReference type="KEGG" id="hpj:jhp_1123"/>
<dbReference type="PATRIC" id="fig|85963.30.peg.1454"/>
<dbReference type="eggNOG" id="COG0244">
    <property type="taxonomic scope" value="Bacteria"/>
</dbReference>
<dbReference type="Proteomes" id="UP000000804">
    <property type="component" value="Chromosome"/>
</dbReference>
<dbReference type="GO" id="GO:0015934">
    <property type="term" value="C:large ribosomal subunit"/>
    <property type="evidence" value="ECO:0007669"/>
    <property type="project" value="InterPro"/>
</dbReference>
<dbReference type="GO" id="GO:0070180">
    <property type="term" value="F:large ribosomal subunit rRNA binding"/>
    <property type="evidence" value="ECO:0007669"/>
    <property type="project" value="UniProtKB-UniRule"/>
</dbReference>
<dbReference type="GO" id="GO:0003735">
    <property type="term" value="F:structural constituent of ribosome"/>
    <property type="evidence" value="ECO:0007669"/>
    <property type="project" value="InterPro"/>
</dbReference>
<dbReference type="GO" id="GO:0006412">
    <property type="term" value="P:translation"/>
    <property type="evidence" value="ECO:0007669"/>
    <property type="project" value="UniProtKB-UniRule"/>
</dbReference>
<dbReference type="CDD" id="cd05797">
    <property type="entry name" value="Ribosomal_L10"/>
    <property type="match status" value="1"/>
</dbReference>
<dbReference type="FunFam" id="3.30.70.1730:FF:000009">
    <property type="entry name" value="50S ribosomal protein L10"/>
    <property type="match status" value="1"/>
</dbReference>
<dbReference type="Gene3D" id="3.30.70.1730">
    <property type="match status" value="1"/>
</dbReference>
<dbReference type="HAMAP" id="MF_00362">
    <property type="entry name" value="Ribosomal_uL10"/>
    <property type="match status" value="1"/>
</dbReference>
<dbReference type="InterPro" id="IPR001790">
    <property type="entry name" value="Ribosomal_uL10"/>
</dbReference>
<dbReference type="InterPro" id="IPR043141">
    <property type="entry name" value="Ribosomal_uL10-like_sf"/>
</dbReference>
<dbReference type="InterPro" id="IPR022973">
    <property type="entry name" value="Ribosomal_uL10_bac"/>
</dbReference>
<dbReference type="InterPro" id="IPR047865">
    <property type="entry name" value="Ribosomal_uL10_bac_type"/>
</dbReference>
<dbReference type="InterPro" id="IPR002363">
    <property type="entry name" value="Ribosomal_uL10_CS_bac"/>
</dbReference>
<dbReference type="NCBIfam" id="NF000955">
    <property type="entry name" value="PRK00099.1-1"/>
    <property type="match status" value="1"/>
</dbReference>
<dbReference type="PANTHER" id="PTHR11560">
    <property type="entry name" value="39S RIBOSOMAL PROTEIN L10, MITOCHONDRIAL"/>
    <property type="match status" value="1"/>
</dbReference>
<dbReference type="Pfam" id="PF00466">
    <property type="entry name" value="Ribosomal_L10"/>
    <property type="match status" value="1"/>
</dbReference>
<dbReference type="SUPFAM" id="SSF160369">
    <property type="entry name" value="Ribosomal protein L10-like"/>
    <property type="match status" value="1"/>
</dbReference>
<dbReference type="PROSITE" id="PS01109">
    <property type="entry name" value="RIBOSOMAL_L10"/>
    <property type="match status" value="1"/>
</dbReference>
<keyword id="KW-0687">Ribonucleoprotein</keyword>
<keyword id="KW-0689">Ribosomal protein</keyword>
<keyword id="KW-0694">RNA-binding</keyword>
<keyword id="KW-0699">rRNA-binding</keyword>